<comment type="function">
    <text evidence="1">Functions in the biosynthesis of branched-chain amino acids. Catalyzes the dehydration of (2R,3R)-2,3-dihydroxy-3-methylpentanoate (2,3-dihydroxy-3-methylvalerate) into 2-oxo-3-methylpentanoate (2-oxo-3-methylvalerate) and of (2R)-2,3-dihydroxy-3-methylbutanoate (2,3-dihydroxyisovalerate) into 2-oxo-3-methylbutanoate (2-oxoisovalerate), the penultimate precursor to L-isoleucine and L-valine, respectively.</text>
</comment>
<comment type="catalytic activity">
    <reaction evidence="1">
        <text>(2R)-2,3-dihydroxy-3-methylbutanoate = 3-methyl-2-oxobutanoate + H2O</text>
        <dbReference type="Rhea" id="RHEA:24809"/>
        <dbReference type="ChEBI" id="CHEBI:11851"/>
        <dbReference type="ChEBI" id="CHEBI:15377"/>
        <dbReference type="ChEBI" id="CHEBI:49072"/>
        <dbReference type="EC" id="4.2.1.9"/>
    </reaction>
    <physiologicalReaction direction="left-to-right" evidence="1">
        <dbReference type="Rhea" id="RHEA:24810"/>
    </physiologicalReaction>
</comment>
<comment type="catalytic activity">
    <reaction evidence="1">
        <text>(2R,3R)-2,3-dihydroxy-3-methylpentanoate = (S)-3-methyl-2-oxopentanoate + H2O</text>
        <dbReference type="Rhea" id="RHEA:27694"/>
        <dbReference type="ChEBI" id="CHEBI:15377"/>
        <dbReference type="ChEBI" id="CHEBI:35146"/>
        <dbReference type="ChEBI" id="CHEBI:49258"/>
        <dbReference type="EC" id="4.2.1.9"/>
    </reaction>
    <physiologicalReaction direction="left-to-right" evidence="1">
        <dbReference type="Rhea" id="RHEA:27695"/>
    </physiologicalReaction>
</comment>
<comment type="cofactor">
    <cofactor evidence="1">
        <name>[2Fe-2S] cluster</name>
        <dbReference type="ChEBI" id="CHEBI:190135"/>
    </cofactor>
    <text evidence="1">Binds 1 [2Fe-2S] cluster per subunit. This cluster acts as a Lewis acid cofactor.</text>
</comment>
<comment type="cofactor">
    <cofactor evidence="1">
        <name>Mg(2+)</name>
        <dbReference type="ChEBI" id="CHEBI:18420"/>
    </cofactor>
</comment>
<comment type="pathway">
    <text evidence="1">Amino-acid biosynthesis; L-isoleucine biosynthesis; L-isoleucine from 2-oxobutanoate: step 3/4.</text>
</comment>
<comment type="pathway">
    <text evidence="1">Amino-acid biosynthesis; L-valine biosynthesis; L-valine from pyruvate: step 3/4.</text>
</comment>
<comment type="subunit">
    <text evidence="1">Homodimer.</text>
</comment>
<comment type="similarity">
    <text evidence="1">Belongs to the IlvD/Edd family.</text>
</comment>
<keyword id="KW-0001">2Fe-2S</keyword>
<keyword id="KW-0028">Amino-acid biosynthesis</keyword>
<keyword id="KW-0100">Branched-chain amino acid biosynthesis</keyword>
<keyword id="KW-0408">Iron</keyword>
<keyword id="KW-0411">Iron-sulfur</keyword>
<keyword id="KW-0456">Lyase</keyword>
<keyword id="KW-0460">Magnesium</keyword>
<keyword id="KW-0479">Metal-binding</keyword>
<accession>B2S7Z5</accession>
<evidence type="ECO:0000255" key="1">
    <source>
        <dbReference type="HAMAP-Rule" id="MF_00012"/>
    </source>
</evidence>
<protein>
    <recommendedName>
        <fullName evidence="1">Dihydroxy-acid dehydratase</fullName>
        <shortName evidence="1">DAD</shortName>
        <ecNumber evidence="1">4.2.1.9</ecNumber>
    </recommendedName>
</protein>
<organism>
    <name type="scientific">Brucella abortus (strain S19)</name>
    <dbReference type="NCBI Taxonomy" id="430066"/>
    <lineage>
        <taxon>Bacteria</taxon>
        <taxon>Pseudomonadati</taxon>
        <taxon>Pseudomonadota</taxon>
        <taxon>Alphaproteobacteria</taxon>
        <taxon>Hyphomicrobiales</taxon>
        <taxon>Brucellaceae</taxon>
        <taxon>Brucella/Ochrobactrum group</taxon>
        <taxon>Brucella</taxon>
    </lineage>
</organism>
<proteinExistence type="inferred from homology"/>
<reference key="1">
    <citation type="journal article" date="2008" name="PLoS ONE">
        <title>Genome sequence of Brucella abortus vaccine strain S19 compared to virulent strains yields candidate virulence genes.</title>
        <authorList>
            <person name="Crasta O.R."/>
            <person name="Folkerts O."/>
            <person name="Fei Z."/>
            <person name="Mane S.P."/>
            <person name="Evans C."/>
            <person name="Martino-Catt S."/>
            <person name="Bricker B."/>
            <person name="Yu G."/>
            <person name="Du L."/>
            <person name="Sobral B.W."/>
        </authorList>
    </citation>
    <scope>NUCLEOTIDE SEQUENCE [LARGE SCALE GENOMIC DNA]</scope>
    <source>
        <strain>S19</strain>
    </source>
</reference>
<gene>
    <name evidence="1" type="primary">ilvD</name>
    <name type="ordered locus">BAbS19_I00910</name>
</gene>
<feature type="chain" id="PRO_1000089371" description="Dihydroxy-acid dehydratase">
    <location>
        <begin position="1"/>
        <end position="611"/>
    </location>
</feature>
<feature type="active site" description="Proton acceptor" evidence="1">
    <location>
        <position position="517"/>
    </location>
</feature>
<feature type="binding site" evidence="1">
    <location>
        <position position="81"/>
    </location>
    <ligand>
        <name>Mg(2+)</name>
        <dbReference type="ChEBI" id="CHEBI:18420"/>
    </ligand>
</feature>
<feature type="binding site" evidence="1">
    <location>
        <position position="122"/>
    </location>
    <ligand>
        <name>[2Fe-2S] cluster</name>
        <dbReference type="ChEBI" id="CHEBI:190135"/>
    </ligand>
</feature>
<feature type="binding site" evidence="1">
    <location>
        <position position="123"/>
    </location>
    <ligand>
        <name>Mg(2+)</name>
        <dbReference type="ChEBI" id="CHEBI:18420"/>
    </ligand>
</feature>
<feature type="binding site" description="via carbamate group" evidence="1">
    <location>
        <position position="124"/>
    </location>
    <ligand>
        <name>Mg(2+)</name>
        <dbReference type="ChEBI" id="CHEBI:18420"/>
    </ligand>
</feature>
<feature type="binding site" evidence="1">
    <location>
        <position position="195"/>
    </location>
    <ligand>
        <name>[2Fe-2S] cluster</name>
        <dbReference type="ChEBI" id="CHEBI:190135"/>
    </ligand>
</feature>
<feature type="binding site" evidence="1">
    <location>
        <position position="491"/>
    </location>
    <ligand>
        <name>Mg(2+)</name>
        <dbReference type="ChEBI" id="CHEBI:18420"/>
    </ligand>
</feature>
<feature type="modified residue" description="N6-carboxylysine" evidence="1">
    <location>
        <position position="124"/>
    </location>
</feature>
<dbReference type="EC" id="4.2.1.9" evidence="1"/>
<dbReference type="EMBL" id="CP000887">
    <property type="protein sequence ID" value="ACD71649.1"/>
    <property type="molecule type" value="Genomic_DNA"/>
</dbReference>
<dbReference type="RefSeq" id="WP_002965347.1">
    <property type="nucleotide sequence ID" value="NC_010742.1"/>
</dbReference>
<dbReference type="SMR" id="B2S7Z5"/>
<dbReference type="GeneID" id="93017425"/>
<dbReference type="KEGG" id="bmc:BAbS19_I00910"/>
<dbReference type="HOGENOM" id="CLU_014271_4_2_5"/>
<dbReference type="UniPathway" id="UPA00047">
    <property type="reaction ID" value="UER00057"/>
</dbReference>
<dbReference type="UniPathway" id="UPA00049">
    <property type="reaction ID" value="UER00061"/>
</dbReference>
<dbReference type="Proteomes" id="UP000002565">
    <property type="component" value="Chromosome 1"/>
</dbReference>
<dbReference type="GO" id="GO:0005829">
    <property type="term" value="C:cytosol"/>
    <property type="evidence" value="ECO:0007669"/>
    <property type="project" value="TreeGrafter"/>
</dbReference>
<dbReference type="GO" id="GO:0051537">
    <property type="term" value="F:2 iron, 2 sulfur cluster binding"/>
    <property type="evidence" value="ECO:0007669"/>
    <property type="project" value="UniProtKB-UniRule"/>
</dbReference>
<dbReference type="GO" id="GO:0004160">
    <property type="term" value="F:dihydroxy-acid dehydratase activity"/>
    <property type="evidence" value="ECO:0007669"/>
    <property type="project" value="UniProtKB-UniRule"/>
</dbReference>
<dbReference type="GO" id="GO:0000287">
    <property type="term" value="F:magnesium ion binding"/>
    <property type="evidence" value="ECO:0007669"/>
    <property type="project" value="UniProtKB-UniRule"/>
</dbReference>
<dbReference type="GO" id="GO:0009097">
    <property type="term" value="P:isoleucine biosynthetic process"/>
    <property type="evidence" value="ECO:0007669"/>
    <property type="project" value="UniProtKB-UniRule"/>
</dbReference>
<dbReference type="GO" id="GO:0009099">
    <property type="term" value="P:L-valine biosynthetic process"/>
    <property type="evidence" value="ECO:0007669"/>
    <property type="project" value="UniProtKB-UniRule"/>
</dbReference>
<dbReference type="FunFam" id="3.50.30.80:FF:000001">
    <property type="entry name" value="Dihydroxy-acid dehydratase"/>
    <property type="match status" value="1"/>
</dbReference>
<dbReference type="Gene3D" id="3.50.30.80">
    <property type="entry name" value="IlvD/EDD C-terminal domain-like"/>
    <property type="match status" value="1"/>
</dbReference>
<dbReference type="HAMAP" id="MF_00012">
    <property type="entry name" value="IlvD"/>
    <property type="match status" value="1"/>
</dbReference>
<dbReference type="InterPro" id="IPR042096">
    <property type="entry name" value="Dihydro-acid_dehy_C"/>
</dbReference>
<dbReference type="InterPro" id="IPR004404">
    <property type="entry name" value="DihydroxyA_deHydtase"/>
</dbReference>
<dbReference type="InterPro" id="IPR020558">
    <property type="entry name" value="DiOHA_6PGluconate_deHydtase_CS"/>
</dbReference>
<dbReference type="InterPro" id="IPR056740">
    <property type="entry name" value="ILV_EDD_C"/>
</dbReference>
<dbReference type="InterPro" id="IPR000581">
    <property type="entry name" value="ILV_EDD_N"/>
</dbReference>
<dbReference type="InterPro" id="IPR037237">
    <property type="entry name" value="IlvD/EDD_N"/>
</dbReference>
<dbReference type="NCBIfam" id="TIGR00110">
    <property type="entry name" value="ilvD"/>
    <property type="match status" value="1"/>
</dbReference>
<dbReference type="NCBIfam" id="NF009103">
    <property type="entry name" value="PRK12448.1"/>
    <property type="match status" value="1"/>
</dbReference>
<dbReference type="PANTHER" id="PTHR43661">
    <property type="entry name" value="D-XYLONATE DEHYDRATASE"/>
    <property type="match status" value="1"/>
</dbReference>
<dbReference type="PANTHER" id="PTHR43661:SF3">
    <property type="entry name" value="D-XYLONATE DEHYDRATASE YAGF-RELATED"/>
    <property type="match status" value="1"/>
</dbReference>
<dbReference type="Pfam" id="PF24877">
    <property type="entry name" value="ILV_EDD_C"/>
    <property type="match status" value="1"/>
</dbReference>
<dbReference type="Pfam" id="PF00920">
    <property type="entry name" value="ILVD_EDD_N"/>
    <property type="match status" value="1"/>
</dbReference>
<dbReference type="SUPFAM" id="SSF143975">
    <property type="entry name" value="IlvD/EDD N-terminal domain-like"/>
    <property type="match status" value="1"/>
</dbReference>
<dbReference type="SUPFAM" id="SSF52016">
    <property type="entry name" value="LeuD/IlvD-like"/>
    <property type="match status" value="1"/>
</dbReference>
<dbReference type="PROSITE" id="PS00886">
    <property type="entry name" value="ILVD_EDD_1"/>
    <property type="match status" value="1"/>
</dbReference>
<dbReference type="PROSITE" id="PS00887">
    <property type="entry name" value="ILVD_EDD_2"/>
    <property type="match status" value="1"/>
</dbReference>
<name>ILVD_BRUA1</name>
<sequence length="611" mass="65310">MPPYRSRTTTHGRNMAGARGLWRATGMKDEDFGKPIIAVVNSFTQFVPGHVHLKDLGQLVAREIESAGGVAKEFNTIAVDDGIAMGHDGMLYSLPSRELIADSVEYMVNAHCADAMVCISNCDKITPGMLMAALRLNIPVVFVSGGPMEAGKVVWEDSVKKLDLVDAMVAAADDHYTDEQVKAIERSACPTCGSCSGMFTANSMNCLTEALGLSLPGNGSTLATHADRKRLFVEAGHLIVDLARRYYEQDDESVLPRSIATFSAFENAMTLDIAMGGSTNTVLHLLAAAQEAEIDFTMADIDRLSRRVPVLCKVAPAVSSVHMEDVHHAGGIMGILGQLDNAGLLTTSIPTVHSETLAKALDHWDVTRTNSEMVHKFYSAAPGGVPTQVAFSQERRFDKVDTDREKGVIRSKEHAFSQDGGLAVLYGNLAEDGCIVKTAGVDDSILKFSGPARIFESQDSAVLGILNGKIKPGDIVLIRYEGPRGGPGMQEMLYPTSYLKSKGLGKACALITDGRFSGGSSGLSIGHVSPEAAEGGTIGLVREGDIIDIDIPNRKIHLAVDDATLAERRAEQDAAGWKPAEERKRKISTALKAYAAMATSAARGAVRKLPD</sequence>